<accession>B2UFK5</accession>
<reference key="1">
    <citation type="submission" date="2008-05" db="EMBL/GenBank/DDBJ databases">
        <title>Complete sequence of chromosome 1 of Ralstonia pickettii 12J.</title>
        <authorList>
            <person name="Lucas S."/>
            <person name="Copeland A."/>
            <person name="Lapidus A."/>
            <person name="Glavina del Rio T."/>
            <person name="Dalin E."/>
            <person name="Tice H."/>
            <person name="Bruce D."/>
            <person name="Goodwin L."/>
            <person name="Pitluck S."/>
            <person name="Meincke L."/>
            <person name="Brettin T."/>
            <person name="Detter J.C."/>
            <person name="Han C."/>
            <person name="Kuske C.R."/>
            <person name="Schmutz J."/>
            <person name="Larimer F."/>
            <person name="Land M."/>
            <person name="Hauser L."/>
            <person name="Kyrpides N."/>
            <person name="Mikhailova N."/>
            <person name="Marsh T."/>
            <person name="Richardson P."/>
        </authorList>
    </citation>
    <scope>NUCLEOTIDE SEQUENCE [LARGE SCALE GENOMIC DNA]</scope>
    <source>
        <strain>12J</strain>
    </source>
</reference>
<feature type="chain" id="PRO_1000144926" description="Putative iron-sulfur cluster insertion protein ErpA">
    <location>
        <begin position="1"/>
        <end position="124"/>
    </location>
</feature>
<feature type="binding site" evidence="1">
    <location>
        <position position="52"/>
    </location>
    <ligand>
        <name>iron-sulfur cluster</name>
        <dbReference type="ChEBI" id="CHEBI:30408"/>
    </ligand>
</feature>
<feature type="binding site" evidence="1">
    <location>
        <position position="116"/>
    </location>
    <ligand>
        <name>iron-sulfur cluster</name>
        <dbReference type="ChEBI" id="CHEBI:30408"/>
    </ligand>
</feature>
<feature type="binding site" evidence="1">
    <location>
        <position position="118"/>
    </location>
    <ligand>
        <name>iron-sulfur cluster</name>
        <dbReference type="ChEBI" id="CHEBI:30408"/>
    </ligand>
</feature>
<sequence length="124" mass="13304">MNAVAQAATPDVNEVPAPLVFTDSAADKVKQLIEEEGNPELKLRVFVQGGGCSGFQYGFTFDEETNEDDTTMTKNGVSLLIDSMSYQYLVGAEIDYKEDINGAQFVIKNPNASTTCGCGSSFSV</sequence>
<gene>
    <name evidence="1" type="primary">erpA</name>
    <name type="ordered locus">Rpic_0370</name>
</gene>
<keyword id="KW-0408">Iron</keyword>
<keyword id="KW-0411">Iron-sulfur</keyword>
<keyword id="KW-0479">Metal-binding</keyword>
<evidence type="ECO:0000255" key="1">
    <source>
        <dbReference type="HAMAP-Rule" id="MF_01380"/>
    </source>
</evidence>
<comment type="function">
    <text evidence="1">Required for insertion of 4Fe-4S clusters.</text>
</comment>
<comment type="cofactor">
    <cofactor evidence="1">
        <name>iron-sulfur cluster</name>
        <dbReference type="ChEBI" id="CHEBI:30408"/>
    </cofactor>
    <text evidence="1">Binds 1 iron-sulfur cluster per subunit.</text>
</comment>
<comment type="subunit">
    <text evidence="1">Homodimer.</text>
</comment>
<comment type="similarity">
    <text evidence="1">Belongs to the HesB/IscA family.</text>
</comment>
<protein>
    <recommendedName>
        <fullName evidence="1">Putative iron-sulfur cluster insertion protein ErpA</fullName>
    </recommendedName>
</protein>
<name>ERPA_RALPJ</name>
<organism>
    <name type="scientific">Ralstonia pickettii (strain 12J)</name>
    <dbReference type="NCBI Taxonomy" id="402626"/>
    <lineage>
        <taxon>Bacteria</taxon>
        <taxon>Pseudomonadati</taxon>
        <taxon>Pseudomonadota</taxon>
        <taxon>Betaproteobacteria</taxon>
        <taxon>Burkholderiales</taxon>
        <taxon>Burkholderiaceae</taxon>
        <taxon>Ralstonia</taxon>
    </lineage>
</organism>
<dbReference type="EMBL" id="CP001068">
    <property type="protein sequence ID" value="ACD25528.1"/>
    <property type="molecule type" value="Genomic_DNA"/>
</dbReference>
<dbReference type="SMR" id="B2UFK5"/>
<dbReference type="STRING" id="402626.Rpic_0370"/>
<dbReference type="KEGG" id="rpi:Rpic_0370"/>
<dbReference type="eggNOG" id="COG0316">
    <property type="taxonomic scope" value="Bacteria"/>
</dbReference>
<dbReference type="HOGENOM" id="CLU_069054_5_3_4"/>
<dbReference type="GO" id="GO:0051537">
    <property type="term" value="F:2 iron, 2 sulfur cluster binding"/>
    <property type="evidence" value="ECO:0007669"/>
    <property type="project" value="TreeGrafter"/>
</dbReference>
<dbReference type="GO" id="GO:0051539">
    <property type="term" value="F:4 iron, 4 sulfur cluster binding"/>
    <property type="evidence" value="ECO:0007669"/>
    <property type="project" value="TreeGrafter"/>
</dbReference>
<dbReference type="GO" id="GO:0005506">
    <property type="term" value="F:iron ion binding"/>
    <property type="evidence" value="ECO:0007669"/>
    <property type="project" value="UniProtKB-UniRule"/>
</dbReference>
<dbReference type="GO" id="GO:0016226">
    <property type="term" value="P:iron-sulfur cluster assembly"/>
    <property type="evidence" value="ECO:0007669"/>
    <property type="project" value="UniProtKB-UniRule"/>
</dbReference>
<dbReference type="FunFam" id="2.60.300.12:FF:000002">
    <property type="entry name" value="Iron-sulfur cluster insertion protein ErpA"/>
    <property type="match status" value="1"/>
</dbReference>
<dbReference type="Gene3D" id="2.60.300.12">
    <property type="entry name" value="HesB-like domain"/>
    <property type="match status" value="1"/>
</dbReference>
<dbReference type="HAMAP" id="MF_01380">
    <property type="entry name" value="Fe_S_insert_ErpA"/>
    <property type="match status" value="1"/>
</dbReference>
<dbReference type="InterPro" id="IPR000361">
    <property type="entry name" value="FeS_biogenesis"/>
</dbReference>
<dbReference type="InterPro" id="IPR016092">
    <property type="entry name" value="FeS_cluster_insertion"/>
</dbReference>
<dbReference type="InterPro" id="IPR017870">
    <property type="entry name" value="FeS_cluster_insertion_CS"/>
</dbReference>
<dbReference type="InterPro" id="IPR023063">
    <property type="entry name" value="FeS_cluster_insertion_RrpA"/>
</dbReference>
<dbReference type="InterPro" id="IPR035903">
    <property type="entry name" value="HesB-like_dom_sf"/>
</dbReference>
<dbReference type="NCBIfam" id="TIGR00049">
    <property type="entry name" value="iron-sulfur cluster assembly accessory protein"/>
    <property type="match status" value="1"/>
</dbReference>
<dbReference type="NCBIfam" id="NF010147">
    <property type="entry name" value="PRK13623.1"/>
    <property type="match status" value="1"/>
</dbReference>
<dbReference type="PANTHER" id="PTHR43011">
    <property type="entry name" value="IRON-SULFUR CLUSTER ASSEMBLY 2 HOMOLOG, MITOCHONDRIAL"/>
    <property type="match status" value="1"/>
</dbReference>
<dbReference type="PANTHER" id="PTHR43011:SF1">
    <property type="entry name" value="IRON-SULFUR CLUSTER ASSEMBLY 2 HOMOLOG, MITOCHONDRIAL"/>
    <property type="match status" value="1"/>
</dbReference>
<dbReference type="Pfam" id="PF01521">
    <property type="entry name" value="Fe-S_biosyn"/>
    <property type="match status" value="1"/>
</dbReference>
<dbReference type="SUPFAM" id="SSF89360">
    <property type="entry name" value="HesB-like domain"/>
    <property type="match status" value="1"/>
</dbReference>
<dbReference type="PROSITE" id="PS01152">
    <property type="entry name" value="HESB"/>
    <property type="match status" value="1"/>
</dbReference>
<proteinExistence type="inferred from homology"/>